<protein>
    <recommendedName>
        <fullName>Uncharacterized protein 066L</fullName>
    </recommendedName>
</protein>
<proteinExistence type="predicted"/>
<feature type="chain" id="PRO_0000410536" description="Uncharacterized protein 066L">
    <location>
        <begin position="1"/>
        <end position="183"/>
    </location>
</feature>
<feature type="region of interest" description="Disordered" evidence="1">
    <location>
        <begin position="1"/>
        <end position="44"/>
    </location>
</feature>
<feature type="region of interest" description="Disordered" evidence="1">
    <location>
        <begin position="68"/>
        <end position="137"/>
    </location>
</feature>
<feature type="region of interest" description="Disordered" evidence="1">
    <location>
        <begin position="163"/>
        <end position="183"/>
    </location>
</feature>
<accession>Q6GZQ9</accession>
<name>066L_FRG3G</name>
<dbReference type="EMBL" id="AY548484">
    <property type="protein sequence ID" value="AAT09726.1"/>
    <property type="molecule type" value="Genomic_DNA"/>
</dbReference>
<dbReference type="RefSeq" id="YP_031645.1">
    <property type="nucleotide sequence ID" value="NC_005946.1"/>
</dbReference>
<dbReference type="KEGG" id="vg:2947766"/>
<dbReference type="Proteomes" id="UP000008770">
    <property type="component" value="Segment"/>
</dbReference>
<reference key="1">
    <citation type="journal article" date="2004" name="Virology">
        <title>Comparative genomic analyses of frog virus 3, type species of the genus Ranavirus (family Iridoviridae).</title>
        <authorList>
            <person name="Tan W.G."/>
            <person name="Barkman T.J."/>
            <person name="Gregory Chinchar V."/>
            <person name="Essani K."/>
        </authorList>
    </citation>
    <scope>NUCLEOTIDE SEQUENCE [LARGE SCALE GENOMIC DNA]</scope>
</reference>
<organismHost>
    <name type="scientific">Dryophytes versicolor</name>
    <name type="common">chameleon treefrog</name>
    <dbReference type="NCBI Taxonomy" id="30343"/>
</organismHost>
<organismHost>
    <name type="scientific">Lithobates pipiens</name>
    <name type="common">Northern leopard frog</name>
    <name type="synonym">Rana pipiens</name>
    <dbReference type="NCBI Taxonomy" id="8404"/>
</organismHost>
<organismHost>
    <name type="scientific">Lithobates sylvaticus</name>
    <name type="common">Wood frog</name>
    <name type="synonym">Rana sylvatica</name>
    <dbReference type="NCBI Taxonomy" id="45438"/>
</organismHost>
<organismHost>
    <name type="scientific">Notophthalmus viridescens</name>
    <name type="common">Eastern newt</name>
    <name type="synonym">Triturus viridescens</name>
    <dbReference type="NCBI Taxonomy" id="8316"/>
</organismHost>
<organism>
    <name type="scientific">Frog virus 3 (isolate Goorha)</name>
    <name type="common">FV-3</name>
    <dbReference type="NCBI Taxonomy" id="654924"/>
    <lineage>
        <taxon>Viruses</taxon>
        <taxon>Varidnaviria</taxon>
        <taxon>Bamfordvirae</taxon>
        <taxon>Nucleocytoviricota</taxon>
        <taxon>Megaviricetes</taxon>
        <taxon>Pimascovirales</taxon>
        <taxon>Iridoviridae</taxon>
        <taxon>Alphairidovirinae</taxon>
        <taxon>Ranavirus</taxon>
        <taxon>Frog virus 3</taxon>
    </lineage>
</organism>
<keyword id="KW-1185">Reference proteome</keyword>
<sequence>MPFYICSDPDPKRTVRGPRFTVPDPKPPPDPAHPLDDTDNVMTAFPKFKPYGFSVYNPWDPIFLSMFGRAGRNGAKGPRGRRRSPRPPGGSSMTPGDDGNQGPRGPGEQRDQPDQMDPLVHPVTSVRSGPWERLGLRGRGESGVLRETLEMWAGQEGLISRVRDDPRESEVRPVTGVQTVWPE</sequence>
<gene>
    <name type="ORF">FV3-066L</name>
</gene>
<evidence type="ECO:0000256" key="1">
    <source>
        <dbReference type="SAM" id="MobiDB-lite"/>
    </source>
</evidence>